<dbReference type="GO" id="GO:0005576">
    <property type="term" value="C:extracellular region"/>
    <property type="evidence" value="ECO:0007669"/>
    <property type="project" value="UniProtKB-SubCell"/>
</dbReference>
<dbReference type="GO" id="GO:0090729">
    <property type="term" value="F:toxin activity"/>
    <property type="evidence" value="ECO:0007669"/>
    <property type="project" value="UniProtKB-KW"/>
</dbReference>
<proteinExistence type="evidence at protein level"/>
<sequence>EPNSMWS</sequence>
<accession>P85014</accession>
<name>CONOM_CONVL</name>
<comment type="function">
    <text>May act as a neurotoxin.</text>
</comment>
<comment type="subcellular location">
    <subcellularLocation>
        <location evidence="1">Secreted</location>
    </subcellularLocation>
</comment>
<comment type="tissue specificity">
    <text evidence="1">Expressed by the venom duct.</text>
</comment>
<comment type="miscellaneous">
    <text evidence="3">The mature peptide does not contain cysteine residue.</text>
</comment>
<comment type="similarity">
    <text evidence="3">Belongs to the conophan family.</text>
</comment>
<organism>
    <name type="scientific">Conus villepinii</name>
    <name type="common">Villepin's cone</name>
    <dbReference type="NCBI Taxonomy" id="257347"/>
    <lineage>
        <taxon>Eukaryota</taxon>
        <taxon>Metazoa</taxon>
        <taxon>Spiralia</taxon>
        <taxon>Lophotrochozoa</taxon>
        <taxon>Mollusca</taxon>
        <taxon>Gastropoda</taxon>
        <taxon>Caenogastropoda</taxon>
        <taxon>Neogastropoda</taxon>
        <taxon>Conoidea</taxon>
        <taxon>Conidae</taxon>
        <taxon>Conus</taxon>
        <taxon>Dauciconus</taxon>
    </lineage>
</organism>
<reference key="1">
    <citation type="journal article" date="2006" name="Prog. Mol. Subcell. Biol.">
        <title>Hyperhydroxylation: a new strategy for neuronal targeting by venomous marine molluscs.</title>
        <authorList>
            <person name="Franco A."/>
            <person name="Pisarewicz K."/>
            <person name="Moller C."/>
            <person name="Mora D."/>
            <person name="Fields G.B."/>
            <person name="Mari F."/>
        </authorList>
    </citation>
    <scope>PROTEIN SEQUENCE</scope>
    <scope>SUBCELLULAR LOCATION</scope>
    <scope>TISSUE SPECIFICITY</scope>
    <scope>HYDROXYLATION AT PRO-2</scope>
    <scope>D-AMINO ACID AT MET-5</scope>
    <source>
        <tissue>Venom</tissue>
    </source>
</reference>
<evidence type="ECO:0000269" key="1">
    <source>
    </source>
</evidence>
<evidence type="ECO:0000303" key="2">
    <source>
    </source>
</evidence>
<evidence type="ECO:0000305" key="3"/>
<feature type="peptide" id="PRO_0000259384" description="Conophan vil-M" evidence="1">
    <location>
        <begin position="1"/>
        <end position="7"/>
    </location>
</feature>
<feature type="modified residue" description="4-hydroxyproline" evidence="1">
    <location>
        <position position="2"/>
    </location>
</feature>
<feature type="modified residue" description="D-methionine" evidence="1">
    <location>
        <position position="5"/>
    </location>
</feature>
<protein>
    <recommendedName>
        <fullName evidence="2">Conophan vil-M</fullName>
    </recommendedName>
</protein>
<keyword id="KW-0208">D-amino acid</keyword>
<keyword id="KW-0903">Direct protein sequencing</keyword>
<keyword id="KW-0379">Hydroxylation</keyword>
<keyword id="KW-0528">Neurotoxin</keyword>
<keyword id="KW-0964">Secreted</keyword>
<keyword id="KW-0800">Toxin</keyword>